<name>Y1493_SALRD</name>
<comment type="similarity">
    <text evidence="2">Belongs to the bacilliredoxin family.</text>
</comment>
<comment type="sequence caution" evidence="2">
    <conflict type="erroneous initiation">
        <sequence resource="EMBL-CDS" id="ABC45609"/>
    </conflict>
</comment>
<protein>
    <recommendedName>
        <fullName evidence="2">Bacilliredoxin SRU_1493</fullName>
    </recommendedName>
</protein>
<gene>
    <name type="ordered locus">SRU_1493</name>
</gene>
<keyword id="KW-1185">Reference proteome</keyword>
<sequence length="170" mass="18626">MPYPKQMVEPMRKELTQLGVEELRTPDEVDAAFDQAEDETMLLVINSVCGCAAGNARPAVAKAKDATDHHPDRYLTVFAGQDLEATERTREYLAGIPPSSPFFALFRDGQPVYVVERKHIEGRNADVIARDLVEAFEAYCGDEEPPADAPSRPDPSSSGEGLPSTFQSIT</sequence>
<organism>
    <name type="scientific">Salinibacter ruber (strain DSM 13855 / M31)</name>
    <dbReference type="NCBI Taxonomy" id="309807"/>
    <lineage>
        <taxon>Bacteria</taxon>
        <taxon>Pseudomonadati</taxon>
        <taxon>Rhodothermota</taxon>
        <taxon>Rhodothermia</taxon>
        <taxon>Rhodothermales</taxon>
        <taxon>Salinibacteraceae</taxon>
        <taxon>Salinibacter</taxon>
    </lineage>
</organism>
<feature type="chain" id="PRO_0000271993" description="Bacilliredoxin SRU_1493">
    <location>
        <begin position="1"/>
        <end position="170"/>
    </location>
</feature>
<feature type="region of interest" description="Disordered" evidence="1">
    <location>
        <begin position="140"/>
        <end position="170"/>
    </location>
</feature>
<accession>Q2S2G5</accession>
<reference key="1">
    <citation type="journal article" date="2005" name="Proc. Natl. Acad. Sci. U.S.A.">
        <title>The genome of Salinibacter ruber: convergence and gene exchange among hyperhalophilic bacteria and archaea.</title>
        <authorList>
            <person name="Mongodin E.F."/>
            <person name="Nelson K.E."/>
            <person name="Daugherty S."/>
            <person name="DeBoy R.T."/>
            <person name="Wister J."/>
            <person name="Khouri H."/>
            <person name="Weidman J."/>
            <person name="Walsh D.A."/>
            <person name="Papke R.T."/>
            <person name="Sanchez Perez G."/>
            <person name="Sharma A.K."/>
            <person name="Nesbo C.L."/>
            <person name="MacLeod D."/>
            <person name="Bapteste E."/>
            <person name="Doolittle W.F."/>
            <person name="Charlebois R.L."/>
            <person name="Legault B."/>
            <person name="Rodriguez-Valera F."/>
        </authorList>
    </citation>
    <scope>NUCLEOTIDE SEQUENCE [LARGE SCALE GENOMIC DNA]</scope>
    <source>
        <strain>DSM 13855 / CECT 5946 / M31</strain>
    </source>
</reference>
<proteinExistence type="inferred from homology"/>
<evidence type="ECO:0000256" key="1">
    <source>
        <dbReference type="SAM" id="MobiDB-lite"/>
    </source>
</evidence>
<evidence type="ECO:0000305" key="2"/>
<dbReference type="EMBL" id="CP000159">
    <property type="protein sequence ID" value="ABC45609.1"/>
    <property type="status" value="ALT_INIT"/>
    <property type="molecule type" value="Genomic_DNA"/>
</dbReference>
<dbReference type="RefSeq" id="WP_164923583.1">
    <property type="nucleotide sequence ID" value="NC_007677.1"/>
</dbReference>
<dbReference type="RefSeq" id="YP_445616.1">
    <property type="nucleotide sequence ID" value="NC_007677.1"/>
</dbReference>
<dbReference type="SMR" id="Q2S2G5"/>
<dbReference type="STRING" id="309807.SRU_1493"/>
<dbReference type="EnsemblBacteria" id="ABC45609">
    <property type="protein sequence ID" value="ABC45609"/>
    <property type="gene ID" value="SRU_1493"/>
</dbReference>
<dbReference type="KEGG" id="sru:SRU_1493"/>
<dbReference type="PATRIC" id="fig|309807.25.peg.1549"/>
<dbReference type="eggNOG" id="ENOG502ZBVN">
    <property type="taxonomic scope" value="Bacteria"/>
</dbReference>
<dbReference type="HOGENOM" id="CLU_1239420_0_0_10"/>
<dbReference type="OrthoDB" id="9793981at2"/>
<dbReference type="Proteomes" id="UP000008674">
    <property type="component" value="Chromosome"/>
</dbReference>
<dbReference type="GO" id="GO:0045454">
    <property type="term" value="P:cell redox homeostasis"/>
    <property type="evidence" value="ECO:0000250"/>
    <property type="project" value="UniProtKB"/>
</dbReference>
<dbReference type="Gene3D" id="3.40.30.10">
    <property type="entry name" value="Glutaredoxin"/>
    <property type="match status" value="1"/>
</dbReference>
<dbReference type="InterPro" id="IPR009474">
    <property type="entry name" value="BrxB/BrxA"/>
</dbReference>
<dbReference type="NCBIfam" id="TIGR04191">
    <property type="entry name" value="YphP_YqiW"/>
    <property type="match status" value="1"/>
</dbReference>
<dbReference type="PANTHER" id="PTHR40052:SF2">
    <property type="entry name" value="BACILLIREDOXIN BRXA"/>
    <property type="match status" value="1"/>
</dbReference>
<dbReference type="PANTHER" id="PTHR40052">
    <property type="entry name" value="UPF0403 PROTEIN YQIW-RELATED"/>
    <property type="match status" value="1"/>
</dbReference>
<dbReference type="Pfam" id="PF06491">
    <property type="entry name" value="Disulph_isomer"/>
    <property type="match status" value="1"/>
</dbReference>